<accession>P25266</accession>
<protein>
    <recommendedName>
        <fullName evidence="4">Type II methylase M.HgiEI</fullName>
        <shortName evidence="5">M.HgiEI</shortName>
        <ecNumber>2.1.1.37</ecNumber>
    </recommendedName>
    <alternativeName>
        <fullName>Cytosine-specific methyltransferase HgiEI</fullName>
    </alternativeName>
    <alternativeName>
        <fullName>Modification methylase HgiEI</fullName>
    </alternativeName>
</protein>
<name>MTE1_HERAU</name>
<comment type="function">
    <text evidence="3 4">A methylase that recognizes the double-stranded sequence 5'-GGWCC-3', methylates C-? on both strands, and protects the DNA from cleavage by the HgiEI endonuclease (PubMed:12654995). This system is more active than isoschizomeric RM.HgiBI (PubMed:7607523).</text>
</comment>
<comment type="catalytic activity">
    <reaction evidence="2">
        <text>a 2'-deoxycytidine in DNA + S-adenosyl-L-methionine = a 5-methyl-2'-deoxycytidine in DNA + S-adenosyl-L-homocysteine + H(+)</text>
        <dbReference type="Rhea" id="RHEA:13681"/>
        <dbReference type="Rhea" id="RHEA-COMP:11369"/>
        <dbReference type="Rhea" id="RHEA-COMP:11370"/>
        <dbReference type="ChEBI" id="CHEBI:15378"/>
        <dbReference type="ChEBI" id="CHEBI:57856"/>
        <dbReference type="ChEBI" id="CHEBI:59789"/>
        <dbReference type="ChEBI" id="CHEBI:85452"/>
        <dbReference type="ChEBI" id="CHEBI:85454"/>
        <dbReference type="EC" id="2.1.1.37"/>
    </reaction>
</comment>
<comment type="similarity">
    <text evidence="1">Belongs to the class I-like SAM-binding methyltransferase superfamily. C5-methyltransferase family.</text>
</comment>
<gene>
    <name evidence="5" type="primary">hgiEIM</name>
</gene>
<sequence>MQQFRFIDLFAGIGGFRLGLEAVGGVCVASAEIDQQAIKVYWQNWPTDGVDHNLGDITQIQQLPAHDVLVGGVPCQPWSIAGKNQAFDDPRGQLWADVIRLVQINQPKAFIFENVKGLVDPRNRLCLEIILDSFKDLGYSVFYKLLNSFDFGVAQNRDRVFIVGIQQKLDLNGFSFPEYAESDQRLYHILDNLEAPETKLESIPIQRNLFGERIEVGYNKLTPRGAFNDFFILNDIRNGPTSIHSWEIYPTTEREKHICMIIMRNRRNSRYGNCDGNPMSYSDIAELVVDLAENELQILVKKRILRQYPDGKYEFFNRRLSGGIDGTYRIFMPNARFFGTLTARGMHDEIAEINVSGANAAEYKYNFIQQVLIPKRYRPITVSEAARLQGFPSTFKFHSNQSANFRLIGNSVAPPVIVALGKRLQCVKLFEQELCEV</sequence>
<proteinExistence type="inferred from homology"/>
<reference key="1">
    <citation type="submission" date="1990-11" db="EMBL/GenBank/DDBJ databases">
        <authorList>
            <person name="Erdmann D."/>
            <person name="Kroeger M."/>
        </authorList>
    </citation>
    <scope>NUCLEOTIDE SEQUENCE [GENOMIC DNA]</scope>
    <source>
        <strain>HPG24</strain>
    </source>
</reference>
<reference key="2">
    <citation type="journal article" date="1995" name="Gene">
        <title>Organization and gene expression within restriction-modification systems of Herpetosiphon giganteus.</title>
        <authorList>
            <person name="Kroeger M."/>
            <person name="Blum E."/>
            <person name="Deppe E."/>
            <person name="Duesterhoeft A."/>
            <person name="Erdmann D."/>
            <person name="Kilz S."/>
            <person name="Meyer-Rogge S."/>
            <person name="Moestl D."/>
        </authorList>
    </citation>
    <scope>DISCUSSION OF SEQUENCE</scope>
    <scope>FUNCTION</scope>
</reference>
<reference key="3">
    <citation type="journal article" date="2003" name="Nucleic Acids Res.">
        <title>A nomenclature for restriction enzymes, DNA methyltransferases, homing endonucleases and their genes.</title>
        <authorList>
            <person name="Roberts R.J."/>
            <person name="Belfort M."/>
            <person name="Bestor T."/>
            <person name="Bhagwat A.S."/>
            <person name="Bickle T.A."/>
            <person name="Bitinaite J."/>
            <person name="Blumenthal R.M."/>
            <person name="Degtyarev S.K."/>
            <person name="Dryden D.T."/>
            <person name="Dybvig K."/>
            <person name="Firman K."/>
            <person name="Gromova E.S."/>
            <person name="Gumport R.I."/>
            <person name="Halford S.E."/>
            <person name="Hattman S."/>
            <person name="Heitman J."/>
            <person name="Hornby D.P."/>
            <person name="Janulaitis A."/>
            <person name="Jeltsch A."/>
            <person name="Josephsen J."/>
            <person name="Kiss A."/>
            <person name="Klaenhammer T.R."/>
            <person name="Kobayashi I."/>
            <person name="Kong H."/>
            <person name="Krueger D.H."/>
            <person name="Lacks S."/>
            <person name="Marinus M.G."/>
            <person name="Miyahara M."/>
            <person name="Morgan R.D."/>
            <person name="Murray N.E."/>
            <person name="Nagaraja V."/>
            <person name="Piekarowicz A."/>
            <person name="Pingoud A."/>
            <person name="Raleigh E."/>
            <person name="Rao D.N."/>
            <person name="Reich N."/>
            <person name="Repin V.E."/>
            <person name="Selker E.U."/>
            <person name="Shaw P.C."/>
            <person name="Stein D.C."/>
            <person name="Stoddard B.L."/>
            <person name="Szybalski W."/>
            <person name="Trautner T.A."/>
            <person name="Van Etten J.L."/>
            <person name="Vitor J.M."/>
            <person name="Wilson G.G."/>
            <person name="Xu S.Y."/>
        </authorList>
    </citation>
    <scope>NOMENCLATURE</scope>
</reference>
<organism>
    <name type="scientific">Herpetosiphon aurantiacus</name>
    <name type="common">Herpetosiphon giganteus</name>
    <dbReference type="NCBI Taxonomy" id="65"/>
    <lineage>
        <taxon>Bacteria</taxon>
        <taxon>Bacillati</taxon>
        <taxon>Chloroflexota</taxon>
        <taxon>Chloroflexia</taxon>
        <taxon>Herpetosiphonales</taxon>
        <taxon>Herpetosiphonaceae</taxon>
        <taxon>Herpetosiphon</taxon>
    </lineage>
</organism>
<feature type="chain" id="PRO_0000087890" description="Type II methylase M.HgiEI">
    <location>
        <begin position="1"/>
        <end position="437"/>
    </location>
</feature>
<feature type="domain" description="SAM-dependent MTase C5-type" evidence="1">
    <location>
        <begin position="4"/>
        <end position="431"/>
    </location>
</feature>
<feature type="active site" evidence="1 2">
    <location>
        <position position="75"/>
    </location>
</feature>
<evidence type="ECO:0000255" key="1">
    <source>
        <dbReference type="PROSITE-ProRule" id="PRU01016"/>
    </source>
</evidence>
<evidence type="ECO:0000255" key="2">
    <source>
        <dbReference type="PROSITE-ProRule" id="PRU10018"/>
    </source>
</evidence>
<evidence type="ECO:0000269" key="3">
    <source>
    </source>
</evidence>
<evidence type="ECO:0000303" key="4">
    <source>
    </source>
</evidence>
<evidence type="ECO:0000303" key="5">
    <source>
    </source>
</evidence>
<keyword id="KW-0238">DNA-binding</keyword>
<keyword id="KW-0489">Methyltransferase</keyword>
<keyword id="KW-0680">Restriction system</keyword>
<keyword id="KW-0949">S-adenosyl-L-methionine</keyword>
<keyword id="KW-0808">Transferase</keyword>
<dbReference type="EC" id="2.1.1.37"/>
<dbReference type="EMBL" id="X55142">
    <property type="protein sequence ID" value="CAA38944.1"/>
    <property type="molecule type" value="Genomic_DNA"/>
</dbReference>
<dbReference type="SMR" id="P25266"/>
<dbReference type="REBASE" id="3419">
    <property type="entry name" value="M.HgiEI"/>
</dbReference>
<dbReference type="PRO" id="PR:P25266"/>
<dbReference type="GO" id="GO:0003886">
    <property type="term" value="F:DNA (cytosine-5-)-methyltransferase activity"/>
    <property type="evidence" value="ECO:0007669"/>
    <property type="project" value="UniProtKB-EC"/>
</dbReference>
<dbReference type="GO" id="GO:0003677">
    <property type="term" value="F:DNA binding"/>
    <property type="evidence" value="ECO:0007669"/>
    <property type="project" value="UniProtKB-KW"/>
</dbReference>
<dbReference type="GO" id="GO:0009307">
    <property type="term" value="P:DNA restriction-modification system"/>
    <property type="evidence" value="ECO:0007669"/>
    <property type="project" value="UniProtKB-KW"/>
</dbReference>
<dbReference type="GO" id="GO:0032259">
    <property type="term" value="P:methylation"/>
    <property type="evidence" value="ECO:0007669"/>
    <property type="project" value="UniProtKB-KW"/>
</dbReference>
<dbReference type="GO" id="GO:0044027">
    <property type="term" value="P:negative regulation of gene expression via chromosomal CpG island methylation"/>
    <property type="evidence" value="ECO:0007669"/>
    <property type="project" value="TreeGrafter"/>
</dbReference>
<dbReference type="CDD" id="cd00315">
    <property type="entry name" value="Cyt_C5_DNA_methylase"/>
    <property type="match status" value="1"/>
</dbReference>
<dbReference type="Gene3D" id="3.90.120.10">
    <property type="entry name" value="DNA Methylase, subunit A, domain 2"/>
    <property type="match status" value="1"/>
</dbReference>
<dbReference type="Gene3D" id="3.40.50.150">
    <property type="entry name" value="Vaccinia Virus protein VP39"/>
    <property type="match status" value="1"/>
</dbReference>
<dbReference type="InterPro" id="IPR050390">
    <property type="entry name" value="C5-Methyltransferase"/>
</dbReference>
<dbReference type="InterPro" id="IPR018117">
    <property type="entry name" value="C5_DNA_meth_AS"/>
</dbReference>
<dbReference type="InterPro" id="IPR001525">
    <property type="entry name" value="C5_MeTfrase"/>
</dbReference>
<dbReference type="InterPro" id="IPR031303">
    <property type="entry name" value="C5_meth_CS"/>
</dbReference>
<dbReference type="InterPro" id="IPR029063">
    <property type="entry name" value="SAM-dependent_MTases_sf"/>
</dbReference>
<dbReference type="NCBIfam" id="TIGR00675">
    <property type="entry name" value="dcm"/>
    <property type="match status" value="1"/>
</dbReference>
<dbReference type="PANTHER" id="PTHR10629">
    <property type="entry name" value="CYTOSINE-SPECIFIC METHYLTRANSFERASE"/>
    <property type="match status" value="1"/>
</dbReference>
<dbReference type="PANTHER" id="PTHR10629:SF52">
    <property type="entry name" value="DNA (CYTOSINE-5)-METHYLTRANSFERASE 1"/>
    <property type="match status" value="1"/>
</dbReference>
<dbReference type="Pfam" id="PF00145">
    <property type="entry name" value="DNA_methylase"/>
    <property type="match status" value="1"/>
</dbReference>
<dbReference type="PRINTS" id="PR00105">
    <property type="entry name" value="C5METTRFRASE"/>
</dbReference>
<dbReference type="SUPFAM" id="SSF53335">
    <property type="entry name" value="S-adenosyl-L-methionine-dependent methyltransferases"/>
    <property type="match status" value="1"/>
</dbReference>
<dbReference type="PROSITE" id="PS00094">
    <property type="entry name" value="C5_MTASE_1"/>
    <property type="match status" value="1"/>
</dbReference>
<dbReference type="PROSITE" id="PS00095">
    <property type="entry name" value="C5_MTASE_2"/>
    <property type="match status" value="1"/>
</dbReference>
<dbReference type="PROSITE" id="PS51679">
    <property type="entry name" value="SAM_MT_C5"/>
    <property type="match status" value="1"/>
</dbReference>